<dbReference type="EMBL" id="X17255">
    <property type="protein sequence ID" value="CAA35143.1"/>
    <property type="molecule type" value="Genomic_DNA"/>
</dbReference>
<dbReference type="PIR" id="S07514">
    <property type="entry name" value="S07514"/>
</dbReference>
<dbReference type="RefSeq" id="NP_523323.1">
    <property type="nucleotide sequence ID" value="NC_003298.1"/>
</dbReference>
<dbReference type="SMR" id="P20327"/>
<dbReference type="KEGG" id="vg:927421"/>
<dbReference type="OrthoDB" id="21336at10239"/>
<dbReference type="Gene3D" id="3.90.75.20">
    <property type="match status" value="1"/>
</dbReference>
<dbReference type="InterPro" id="IPR044925">
    <property type="entry name" value="His-Me_finger_sf"/>
</dbReference>
<dbReference type="InterPro" id="IPR003615">
    <property type="entry name" value="HNH_nuc"/>
</dbReference>
<dbReference type="Pfam" id="PF13392">
    <property type="entry name" value="HNH_3"/>
    <property type="match status" value="1"/>
</dbReference>
<dbReference type="SUPFAM" id="SSF54060">
    <property type="entry name" value="His-Me finger endonucleases"/>
    <property type="match status" value="1"/>
</dbReference>
<protein>
    <recommendedName>
        <fullName>Uncharacterized gene 5.3 protein</fullName>
    </recommendedName>
</protein>
<organism>
    <name type="scientific">Enterobacteria phage T3</name>
    <name type="common">Bacteriophage T3</name>
    <dbReference type="NCBI Taxonomy" id="10759"/>
    <lineage>
        <taxon>Viruses</taxon>
        <taxon>Duplodnaviria</taxon>
        <taxon>Heunggongvirae</taxon>
        <taxon>Uroviricota</taxon>
        <taxon>Caudoviricetes</taxon>
        <taxon>Autographiviridae</taxon>
        <taxon>Studiervirinae</taxon>
        <taxon>Teetrevirus</taxon>
        <taxon>Teetrevirus T3</taxon>
    </lineage>
</organism>
<feature type="chain" id="PRO_0000106498" description="Uncharacterized gene 5.3 protein">
    <location>
        <begin position="1"/>
        <end position="101"/>
    </location>
</feature>
<gene>
    <name type="primary">5.3</name>
</gene>
<accession>P20327</accession>
<name>Y53_BPT3</name>
<sequence>MGGVATLRFHKMPTGCIVCVSHKRNQDGYFRYSIGSSRKGEKKHFMFHRWVWEQHKGPIPDGYEIDHICLNRGCCNVEHLQCIPKRDHIIKTNKERKLVKK</sequence>
<proteinExistence type="predicted"/>
<reference key="1">
    <citation type="journal article" date="1989" name="J. Mol. Biol.">
        <title>Sequence of bacteriophage T3 DNA from gene 2.5 through gene 9.</title>
        <authorList>
            <person name="Beck P.J."/>
            <person name="Gonzalez S."/>
            <person name="Ward C.L."/>
            <person name="Molineux I.J."/>
        </authorList>
    </citation>
    <scope>NUCLEOTIDE SEQUENCE [GENOMIC DNA]</scope>
    <source>
        <strain>Luria</strain>
    </source>
</reference>
<organismHost>
    <name type="scientific">Escherichia coli</name>
    <dbReference type="NCBI Taxonomy" id="562"/>
</organismHost>